<comment type="function">
    <text evidence="1">Converts molybdopterin precursor Z into molybdopterin. This requires the incorporation of two sulfur atoms into precursor Z to generate a dithiolene group. The sulfur is provided by MoaD (By similarity).</text>
</comment>
<comment type="catalytic activity">
    <reaction>
        <text>2 [molybdopterin-synthase sulfur-carrier protein]-C-terminal-Gly-aminoethanethioate + cyclic pyranopterin phosphate + H2O = molybdopterin + 2 [molybdopterin-synthase sulfur-carrier protein]-C-terminal Gly-Gly + 2 H(+)</text>
        <dbReference type="Rhea" id="RHEA:26333"/>
        <dbReference type="Rhea" id="RHEA-COMP:12202"/>
        <dbReference type="Rhea" id="RHEA-COMP:19907"/>
        <dbReference type="ChEBI" id="CHEBI:15377"/>
        <dbReference type="ChEBI" id="CHEBI:15378"/>
        <dbReference type="ChEBI" id="CHEBI:58698"/>
        <dbReference type="ChEBI" id="CHEBI:59648"/>
        <dbReference type="ChEBI" id="CHEBI:90778"/>
        <dbReference type="ChEBI" id="CHEBI:232372"/>
        <dbReference type="EC" id="2.8.1.12"/>
    </reaction>
</comment>
<comment type="pathway">
    <text>Cofactor biosynthesis; molybdopterin biosynthesis.</text>
</comment>
<comment type="subunit">
    <text evidence="1">Heterotetramer of 2 MoaD subunits and 2 MoaE subunits. Also stable as homodimer. The enzyme changes between these two forms during catalysis (By similarity).</text>
</comment>
<comment type="similarity">
    <text evidence="2">Belongs to the MoaE family.</text>
</comment>
<sequence length="146" mass="15779">MRVLVQAEPFEFGAEAQTFADGAAGAGAIVTFTGLVRDLSGALEAMEIEHYPGMTERAIAAIAEEARQRWHLIDALVIHRHGRLGPSEPIMMVATAAAHRAEAFAAAEFLMDYLKSRAPFWKKEVTAGGADWVAAKEADEAALGRW</sequence>
<evidence type="ECO:0000250" key="1"/>
<evidence type="ECO:0000305" key="2"/>
<gene>
    <name type="primary">moaE</name>
    <name type="ordered locus">RHOS4_26870</name>
    <name type="ORF">RSP_1071</name>
</gene>
<reference key="1">
    <citation type="journal article" date="1996" name="J. Bacteriol.">
        <title>Isolation and expression of the Rhodobacter sphaeroides gene (pgsA) encoding phosphatidylglycerophosphate synthase.</title>
        <authorList>
            <person name="Dryden S.C."/>
            <person name="Dowhan W."/>
        </authorList>
    </citation>
    <scope>NUCLEOTIDE SEQUENCE [GENOMIC DNA]</scope>
</reference>
<reference key="2">
    <citation type="submission" date="2005-09" db="EMBL/GenBank/DDBJ databases">
        <title>Complete sequence of chromosome 1 of Rhodobacter sphaeroides 2.4.1.</title>
        <authorList>
            <person name="Copeland A."/>
            <person name="Lucas S."/>
            <person name="Lapidus A."/>
            <person name="Barry K."/>
            <person name="Detter J.C."/>
            <person name="Glavina T."/>
            <person name="Hammon N."/>
            <person name="Israni S."/>
            <person name="Pitluck S."/>
            <person name="Richardson P."/>
            <person name="Mackenzie C."/>
            <person name="Choudhary M."/>
            <person name="Larimer F."/>
            <person name="Hauser L.J."/>
            <person name="Land M."/>
            <person name="Donohue T.J."/>
            <person name="Kaplan S."/>
        </authorList>
    </citation>
    <scope>NUCLEOTIDE SEQUENCE [LARGE SCALE GENOMIC DNA]</scope>
    <source>
        <strain>ATCC 17023 / DSM 158 / JCM 6121 / CCUG 31486 / LMG 2827 / NBRC 12203 / NCIMB 8253 / ATH 2.4.1.</strain>
    </source>
</reference>
<keyword id="KW-0501">Molybdenum cofactor biosynthesis</keyword>
<keyword id="KW-1185">Reference proteome</keyword>
<keyword id="KW-0808">Transferase</keyword>
<name>MOAE_CERS4</name>
<protein>
    <recommendedName>
        <fullName>Molybdopterin synthase catalytic subunit</fullName>
        <ecNumber>2.8.1.12</ecNumber>
    </recommendedName>
    <alternativeName>
        <fullName>MPT synthase subunit 2</fullName>
    </alternativeName>
    <alternativeName>
        <fullName>Molybdenum cofactor biosynthesis protein E</fullName>
    </alternativeName>
    <alternativeName>
        <fullName>Molybdopterin-converting factor large subunit</fullName>
    </alternativeName>
    <alternativeName>
        <fullName>Molybdopterin-converting factor subunit 2</fullName>
    </alternativeName>
</protein>
<proteinExistence type="inferred from homology"/>
<dbReference type="EC" id="2.8.1.12"/>
<dbReference type="EMBL" id="U29587">
    <property type="protein sequence ID" value="AAC44004.1"/>
    <property type="molecule type" value="Genomic_DNA"/>
</dbReference>
<dbReference type="EMBL" id="CP000143">
    <property type="protein sequence ID" value="ABA80255.1"/>
    <property type="molecule type" value="Genomic_DNA"/>
</dbReference>
<dbReference type="RefSeq" id="WP_002721436.1">
    <property type="nucleotide sequence ID" value="NZ_CP030271.1"/>
</dbReference>
<dbReference type="RefSeq" id="YP_354156.1">
    <property type="nucleotide sequence ID" value="NC_007493.2"/>
</dbReference>
<dbReference type="SMR" id="Q53091"/>
<dbReference type="STRING" id="272943.RSP_1071"/>
<dbReference type="EnsemblBacteria" id="ABA80255">
    <property type="protein sequence ID" value="ABA80255"/>
    <property type="gene ID" value="RSP_1071"/>
</dbReference>
<dbReference type="GeneID" id="3720886"/>
<dbReference type="KEGG" id="rsp:RSP_1071"/>
<dbReference type="PATRIC" id="fig|272943.9.peg.3045"/>
<dbReference type="eggNOG" id="COG0314">
    <property type="taxonomic scope" value="Bacteria"/>
</dbReference>
<dbReference type="OrthoDB" id="9803224at2"/>
<dbReference type="PhylomeDB" id="Q53091"/>
<dbReference type="UniPathway" id="UPA00344"/>
<dbReference type="Proteomes" id="UP000002703">
    <property type="component" value="Chromosome 1"/>
</dbReference>
<dbReference type="GO" id="GO:0030366">
    <property type="term" value="F:molybdopterin synthase activity"/>
    <property type="evidence" value="ECO:0007669"/>
    <property type="project" value="UniProtKB-EC"/>
</dbReference>
<dbReference type="GO" id="GO:0006777">
    <property type="term" value="P:Mo-molybdopterin cofactor biosynthetic process"/>
    <property type="evidence" value="ECO:0007669"/>
    <property type="project" value="UniProtKB-KW"/>
</dbReference>
<dbReference type="Gene3D" id="3.90.1170.40">
    <property type="entry name" value="Molybdopterin biosynthesis MoaE subunit"/>
    <property type="match status" value="1"/>
</dbReference>
<dbReference type="InterPro" id="IPR036563">
    <property type="entry name" value="MoaE_sf"/>
</dbReference>
<dbReference type="InterPro" id="IPR003448">
    <property type="entry name" value="Mopterin_biosynth_MoaE"/>
</dbReference>
<dbReference type="PANTHER" id="PTHR23404">
    <property type="entry name" value="MOLYBDOPTERIN SYNTHASE RELATED"/>
    <property type="match status" value="1"/>
</dbReference>
<dbReference type="Pfam" id="PF02391">
    <property type="entry name" value="MoaE"/>
    <property type="match status" value="1"/>
</dbReference>
<dbReference type="SUPFAM" id="SSF54690">
    <property type="entry name" value="Molybdopterin synthase subunit MoaE"/>
    <property type="match status" value="1"/>
</dbReference>
<accession>Q53091</accession>
<accession>Q3IYX9</accession>
<organism>
    <name type="scientific">Cereibacter sphaeroides (strain ATCC 17023 / DSM 158 / JCM 6121 / CCUG 31486 / LMG 2827 / NBRC 12203 / NCIMB 8253 / ATH 2.4.1.)</name>
    <name type="common">Rhodobacter sphaeroides</name>
    <dbReference type="NCBI Taxonomy" id="272943"/>
    <lineage>
        <taxon>Bacteria</taxon>
        <taxon>Pseudomonadati</taxon>
        <taxon>Pseudomonadota</taxon>
        <taxon>Alphaproteobacteria</taxon>
        <taxon>Rhodobacterales</taxon>
        <taxon>Paracoccaceae</taxon>
        <taxon>Cereibacter</taxon>
    </lineage>
</organism>
<feature type="chain" id="PRO_0000163094" description="Molybdopterin synthase catalytic subunit">
    <location>
        <begin position="1"/>
        <end position="146"/>
    </location>
</feature>
<feature type="binding site" evidence="1">
    <location>
        <begin position="35"/>
        <end position="37"/>
    </location>
    <ligand>
        <name>substrate</name>
    </ligand>
</feature>
<feature type="binding site" evidence="1">
    <location>
        <begin position="99"/>
        <end position="100"/>
    </location>
    <ligand>
        <name>substrate</name>
    </ligand>
</feature>
<feature type="binding site" evidence="1">
    <location>
        <position position="115"/>
    </location>
    <ligand>
        <name>substrate</name>
    </ligand>
</feature>
<feature type="binding site" evidence="1">
    <location>
        <begin position="122"/>
        <end position="124"/>
    </location>
    <ligand>
        <name>substrate</name>
    </ligand>
</feature>